<accession>Q5VSY0</accession>
<accession>Q96LI0</accession>
<accession>Q9BYI1</accession>
<accession>Q9BYI2</accession>
<accession>Q9H225</accession>
<keyword id="KW-0025">Alternative splicing</keyword>
<keyword id="KW-0175">Coiled coil</keyword>
<keyword id="KW-0333">Golgi apparatus</keyword>
<keyword id="KW-0597">Phosphoprotein</keyword>
<keyword id="KW-1267">Proteomics identification</keyword>
<keyword id="KW-1185">Reference proteome</keyword>
<reference key="1">
    <citation type="journal article" date="2000" name="J. Biol. Chem.">
        <title>Binding and phosphorylation of a novel male germ cell-specific cGMP-dependent protein kinase-anchoring protein by cGMP-dependent protein kinase Ialpha.</title>
        <authorList>
            <person name="Yuasa K."/>
            <person name="Omori K."/>
            <person name="Yanaka N."/>
        </authorList>
    </citation>
    <scope>NUCLEOTIDE SEQUENCE [MRNA] (ISOFORMS 1 AND 2)</scope>
</reference>
<reference key="2">
    <citation type="submission" date="2000-11" db="EMBL/GenBank/DDBJ databases">
        <title>Cloning of FKSG21, a novel gene located on human chromosome 9.</title>
        <authorList>
            <person name="Wang Y.-G."/>
            <person name="Gong L."/>
        </authorList>
    </citation>
    <scope>NUCLEOTIDE SEQUENCE [LARGE SCALE MRNA] (ISOFORM 1)</scope>
</reference>
<reference key="3">
    <citation type="journal article" date="2004" name="Nature">
        <title>DNA sequence and analysis of human chromosome 9.</title>
        <authorList>
            <person name="Humphray S.J."/>
            <person name="Oliver K."/>
            <person name="Hunt A.R."/>
            <person name="Plumb R.W."/>
            <person name="Loveland J.E."/>
            <person name="Howe K.L."/>
            <person name="Andrews T.D."/>
            <person name="Searle S."/>
            <person name="Hunt S.E."/>
            <person name="Scott C.E."/>
            <person name="Jones M.C."/>
            <person name="Ainscough R."/>
            <person name="Almeida J.P."/>
            <person name="Ambrose K.D."/>
            <person name="Ashwell R.I.S."/>
            <person name="Babbage A.K."/>
            <person name="Babbage S."/>
            <person name="Bagguley C.L."/>
            <person name="Bailey J."/>
            <person name="Banerjee R."/>
            <person name="Barker D.J."/>
            <person name="Barlow K.F."/>
            <person name="Bates K."/>
            <person name="Beasley H."/>
            <person name="Beasley O."/>
            <person name="Bird C.P."/>
            <person name="Bray-Allen S."/>
            <person name="Brown A.J."/>
            <person name="Brown J.Y."/>
            <person name="Burford D."/>
            <person name="Burrill W."/>
            <person name="Burton J."/>
            <person name="Carder C."/>
            <person name="Carter N.P."/>
            <person name="Chapman J.C."/>
            <person name="Chen Y."/>
            <person name="Clarke G."/>
            <person name="Clark S.Y."/>
            <person name="Clee C.M."/>
            <person name="Clegg S."/>
            <person name="Collier R.E."/>
            <person name="Corby N."/>
            <person name="Crosier M."/>
            <person name="Cummings A.T."/>
            <person name="Davies J."/>
            <person name="Dhami P."/>
            <person name="Dunn M."/>
            <person name="Dutta I."/>
            <person name="Dyer L.W."/>
            <person name="Earthrowl M.E."/>
            <person name="Faulkner L."/>
            <person name="Fleming C.J."/>
            <person name="Frankish A."/>
            <person name="Frankland J.A."/>
            <person name="French L."/>
            <person name="Fricker D.G."/>
            <person name="Garner P."/>
            <person name="Garnett J."/>
            <person name="Ghori J."/>
            <person name="Gilbert J.G.R."/>
            <person name="Glison C."/>
            <person name="Grafham D.V."/>
            <person name="Gribble S."/>
            <person name="Griffiths C."/>
            <person name="Griffiths-Jones S."/>
            <person name="Grocock R."/>
            <person name="Guy J."/>
            <person name="Hall R.E."/>
            <person name="Hammond S."/>
            <person name="Harley J.L."/>
            <person name="Harrison E.S.I."/>
            <person name="Hart E.A."/>
            <person name="Heath P.D."/>
            <person name="Henderson C.D."/>
            <person name="Hopkins B.L."/>
            <person name="Howard P.J."/>
            <person name="Howden P.J."/>
            <person name="Huckle E."/>
            <person name="Johnson C."/>
            <person name="Johnson D."/>
            <person name="Joy A.A."/>
            <person name="Kay M."/>
            <person name="Keenan S."/>
            <person name="Kershaw J.K."/>
            <person name="Kimberley A.M."/>
            <person name="King A."/>
            <person name="Knights A."/>
            <person name="Laird G.K."/>
            <person name="Langford C."/>
            <person name="Lawlor S."/>
            <person name="Leongamornlert D.A."/>
            <person name="Leversha M."/>
            <person name="Lloyd C."/>
            <person name="Lloyd D.M."/>
            <person name="Lovell J."/>
            <person name="Martin S."/>
            <person name="Mashreghi-Mohammadi M."/>
            <person name="Matthews L."/>
            <person name="McLaren S."/>
            <person name="McLay K.E."/>
            <person name="McMurray A."/>
            <person name="Milne S."/>
            <person name="Nickerson T."/>
            <person name="Nisbett J."/>
            <person name="Nordsiek G."/>
            <person name="Pearce A.V."/>
            <person name="Peck A.I."/>
            <person name="Porter K.M."/>
            <person name="Pandian R."/>
            <person name="Pelan S."/>
            <person name="Phillimore B."/>
            <person name="Povey S."/>
            <person name="Ramsey Y."/>
            <person name="Rand V."/>
            <person name="Scharfe M."/>
            <person name="Sehra H.K."/>
            <person name="Shownkeen R."/>
            <person name="Sims S.K."/>
            <person name="Skuce C.D."/>
            <person name="Smith M."/>
            <person name="Steward C.A."/>
            <person name="Swarbreck D."/>
            <person name="Sycamore N."/>
            <person name="Tester J."/>
            <person name="Thorpe A."/>
            <person name="Tracey A."/>
            <person name="Tromans A."/>
            <person name="Thomas D.W."/>
            <person name="Wall M."/>
            <person name="Wallis J.M."/>
            <person name="West A.P."/>
            <person name="Whitehead S.L."/>
            <person name="Willey D.L."/>
            <person name="Williams S.A."/>
            <person name="Wilming L."/>
            <person name="Wray P.W."/>
            <person name="Young L."/>
            <person name="Ashurst J.L."/>
            <person name="Coulson A."/>
            <person name="Blocker H."/>
            <person name="Durbin R.M."/>
            <person name="Sulston J.E."/>
            <person name="Hubbard T."/>
            <person name="Jackson M.J."/>
            <person name="Bentley D.R."/>
            <person name="Beck S."/>
            <person name="Rogers J."/>
            <person name="Dunham I."/>
        </authorList>
    </citation>
    <scope>NUCLEOTIDE SEQUENCE [LARGE SCALE GENOMIC DNA]</scope>
</reference>
<reference key="4">
    <citation type="submission" date="2005-07" db="EMBL/GenBank/DDBJ databases">
        <authorList>
            <person name="Mural R.J."/>
            <person name="Istrail S."/>
            <person name="Sutton G.G."/>
            <person name="Florea L."/>
            <person name="Halpern A.L."/>
            <person name="Mobarry C.M."/>
            <person name="Lippert R."/>
            <person name="Walenz B."/>
            <person name="Shatkay H."/>
            <person name="Dew I."/>
            <person name="Miller J.R."/>
            <person name="Flanigan M.J."/>
            <person name="Edwards N.J."/>
            <person name="Bolanos R."/>
            <person name="Fasulo D."/>
            <person name="Halldorsson B.V."/>
            <person name="Hannenhalli S."/>
            <person name="Turner R."/>
            <person name="Yooseph S."/>
            <person name="Lu F."/>
            <person name="Nusskern D.R."/>
            <person name="Shue B.C."/>
            <person name="Zheng X.H."/>
            <person name="Zhong F."/>
            <person name="Delcher A.L."/>
            <person name="Huson D.H."/>
            <person name="Kravitz S.A."/>
            <person name="Mouchard L."/>
            <person name="Reinert K."/>
            <person name="Remington K.A."/>
            <person name="Clark A.G."/>
            <person name="Waterman M.S."/>
            <person name="Eichler E.E."/>
            <person name="Adams M.D."/>
            <person name="Hunkapiller M.W."/>
            <person name="Myers E.W."/>
            <person name="Venter J.C."/>
        </authorList>
    </citation>
    <scope>NUCLEOTIDE SEQUENCE [LARGE SCALE GENOMIC DNA]</scope>
</reference>
<reference key="5">
    <citation type="journal article" date="2004" name="Genome Res.">
        <title>The status, quality, and expansion of the NIH full-length cDNA project: the Mammalian Gene Collection (MGC).</title>
        <authorList>
            <consortium name="The MGC Project Team"/>
        </authorList>
    </citation>
    <scope>NUCLEOTIDE SEQUENCE [LARGE SCALE MRNA] (ISOFORM 1)</scope>
    <source>
        <tissue>Skin</tissue>
    </source>
</reference>
<reference key="6">
    <citation type="journal article" date="2004" name="Nat. Genet.">
        <title>Complete sequencing and characterization of 21,243 full-length human cDNAs.</title>
        <authorList>
            <person name="Ota T."/>
            <person name="Suzuki Y."/>
            <person name="Nishikawa T."/>
            <person name="Otsuki T."/>
            <person name="Sugiyama T."/>
            <person name="Irie R."/>
            <person name="Wakamatsu A."/>
            <person name="Hayashi K."/>
            <person name="Sato H."/>
            <person name="Nagai K."/>
            <person name="Kimura K."/>
            <person name="Makita H."/>
            <person name="Sekine M."/>
            <person name="Obayashi M."/>
            <person name="Nishi T."/>
            <person name="Shibahara T."/>
            <person name="Tanaka T."/>
            <person name="Ishii S."/>
            <person name="Yamamoto J."/>
            <person name="Saito K."/>
            <person name="Kawai Y."/>
            <person name="Isono Y."/>
            <person name="Nakamura Y."/>
            <person name="Nagahari K."/>
            <person name="Murakami K."/>
            <person name="Yasuda T."/>
            <person name="Iwayanagi T."/>
            <person name="Wagatsuma M."/>
            <person name="Shiratori A."/>
            <person name="Sudo H."/>
            <person name="Hosoiri T."/>
            <person name="Kaku Y."/>
            <person name="Kodaira H."/>
            <person name="Kondo H."/>
            <person name="Sugawara M."/>
            <person name="Takahashi M."/>
            <person name="Kanda K."/>
            <person name="Yokoi T."/>
            <person name="Furuya T."/>
            <person name="Kikkawa E."/>
            <person name="Omura Y."/>
            <person name="Abe K."/>
            <person name="Kamihara K."/>
            <person name="Katsuta N."/>
            <person name="Sato K."/>
            <person name="Tanikawa M."/>
            <person name="Yamazaki M."/>
            <person name="Ninomiya K."/>
            <person name="Ishibashi T."/>
            <person name="Yamashita H."/>
            <person name="Murakawa K."/>
            <person name="Fujimori K."/>
            <person name="Tanai H."/>
            <person name="Kimata M."/>
            <person name="Watanabe M."/>
            <person name="Hiraoka S."/>
            <person name="Chiba Y."/>
            <person name="Ishida S."/>
            <person name="Ono Y."/>
            <person name="Takiguchi S."/>
            <person name="Watanabe S."/>
            <person name="Yosida M."/>
            <person name="Hotuta T."/>
            <person name="Kusano J."/>
            <person name="Kanehori K."/>
            <person name="Takahashi-Fujii A."/>
            <person name="Hara H."/>
            <person name="Tanase T.-O."/>
            <person name="Nomura Y."/>
            <person name="Togiya S."/>
            <person name="Komai F."/>
            <person name="Hara R."/>
            <person name="Takeuchi K."/>
            <person name="Arita M."/>
            <person name="Imose N."/>
            <person name="Musashino K."/>
            <person name="Yuuki H."/>
            <person name="Oshima A."/>
            <person name="Sasaki N."/>
            <person name="Aotsuka S."/>
            <person name="Yoshikawa Y."/>
            <person name="Matsunawa H."/>
            <person name="Ichihara T."/>
            <person name="Shiohata N."/>
            <person name="Sano S."/>
            <person name="Moriya S."/>
            <person name="Momiyama H."/>
            <person name="Satoh N."/>
            <person name="Takami S."/>
            <person name="Terashima Y."/>
            <person name="Suzuki O."/>
            <person name="Nakagawa S."/>
            <person name="Senoh A."/>
            <person name="Mizoguchi H."/>
            <person name="Goto Y."/>
            <person name="Shimizu F."/>
            <person name="Wakebe H."/>
            <person name="Hishigaki H."/>
            <person name="Watanabe T."/>
            <person name="Sugiyama A."/>
            <person name="Takemoto M."/>
            <person name="Kawakami B."/>
            <person name="Yamazaki M."/>
            <person name="Watanabe K."/>
            <person name="Kumagai A."/>
            <person name="Itakura S."/>
            <person name="Fukuzumi Y."/>
            <person name="Fujimori Y."/>
            <person name="Komiyama M."/>
            <person name="Tashiro H."/>
            <person name="Tanigami A."/>
            <person name="Fujiwara T."/>
            <person name="Ono T."/>
            <person name="Yamada K."/>
            <person name="Fujii Y."/>
            <person name="Ozaki K."/>
            <person name="Hirao M."/>
            <person name="Ohmori Y."/>
            <person name="Kawabata A."/>
            <person name="Hikiji T."/>
            <person name="Kobatake N."/>
            <person name="Inagaki H."/>
            <person name="Ikema Y."/>
            <person name="Okamoto S."/>
            <person name="Okitani R."/>
            <person name="Kawakami T."/>
            <person name="Noguchi S."/>
            <person name="Itoh T."/>
            <person name="Shigeta K."/>
            <person name="Senba T."/>
            <person name="Matsumura K."/>
            <person name="Nakajima Y."/>
            <person name="Mizuno T."/>
            <person name="Morinaga M."/>
            <person name="Sasaki M."/>
            <person name="Togashi T."/>
            <person name="Oyama M."/>
            <person name="Hata H."/>
            <person name="Watanabe M."/>
            <person name="Komatsu T."/>
            <person name="Mizushima-Sugano J."/>
            <person name="Satoh T."/>
            <person name="Shirai Y."/>
            <person name="Takahashi Y."/>
            <person name="Nakagawa K."/>
            <person name="Okumura K."/>
            <person name="Nagase T."/>
            <person name="Nomura N."/>
            <person name="Kikuchi H."/>
            <person name="Masuho Y."/>
            <person name="Yamashita R."/>
            <person name="Nakai K."/>
            <person name="Yada T."/>
            <person name="Nakamura Y."/>
            <person name="Ohara O."/>
            <person name="Isogai T."/>
            <person name="Sugano S."/>
        </authorList>
    </citation>
    <scope>NUCLEOTIDE SEQUENCE [LARGE SCALE MRNA] OF 145-366 (ISOFORM 1)</scope>
    <source>
        <tissue>Testis</tissue>
    </source>
</reference>
<reference key="7">
    <citation type="journal article" date="2005" name="Genes Chromosomes Cancer">
        <title>Delineation of the minimal commonly deleted segment and identification of candidate tumor-suppressor genes in del(9q) acute myeloid leukemia.</title>
        <authorList>
            <person name="Sweetser D.A."/>
            <person name="Peniket A.J."/>
            <person name="Haaland C."/>
            <person name="Blomberg A.A."/>
            <person name="Zhang Y."/>
            <person name="Zaidi S.T."/>
            <person name="Dayyani F."/>
            <person name="Zhao Z."/>
            <person name="Heerema N.A."/>
            <person name="Boultwood J."/>
            <person name="Dewald G.W."/>
            <person name="Paietta E."/>
            <person name="Slovak M.L."/>
            <person name="Willman C.L."/>
            <person name="Wainscoat J.S."/>
            <person name="Bernstein I.D."/>
            <person name="Daly S.B."/>
        </authorList>
    </citation>
    <scope>IDENTIFICATION</scope>
</reference>
<reference key="8">
    <citation type="journal article" date="2008" name="Proc. Natl. Acad. Sci. U.S.A.">
        <title>A quantitative atlas of mitotic phosphorylation.</title>
        <authorList>
            <person name="Dephoure N."/>
            <person name="Zhou C."/>
            <person name="Villen J."/>
            <person name="Beausoleil S.A."/>
            <person name="Bakalarski C.E."/>
            <person name="Elledge S.J."/>
            <person name="Gygi S.P."/>
        </authorList>
    </citation>
    <scope>PHOSPHORYLATION [LARGE SCALE ANALYSIS] AT SER-27</scope>
    <scope>IDENTIFICATION BY MASS SPECTROMETRY [LARGE SCALE ANALYSIS]</scope>
    <source>
        <tissue>Cervix carcinoma</tissue>
    </source>
</reference>
<reference key="9">
    <citation type="journal article" date="2010" name="Sci. Signal.">
        <title>Quantitative phosphoproteomics reveals widespread full phosphorylation site occupancy during mitosis.</title>
        <authorList>
            <person name="Olsen J.V."/>
            <person name="Vermeulen M."/>
            <person name="Santamaria A."/>
            <person name="Kumar C."/>
            <person name="Miller M.L."/>
            <person name="Jensen L.J."/>
            <person name="Gnad F."/>
            <person name="Cox J."/>
            <person name="Jensen T.S."/>
            <person name="Nigg E.A."/>
            <person name="Brunak S."/>
            <person name="Mann M."/>
        </authorList>
    </citation>
    <scope>PHOSPHORYLATION [LARGE SCALE ANALYSIS] AT SER-27</scope>
    <scope>IDENTIFICATION BY MASS SPECTROMETRY [LARGE SCALE ANALYSIS]</scope>
    <source>
        <tissue>Cervix carcinoma</tissue>
    </source>
</reference>
<reference key="10">
    <citation type="journal article" date="2013" name="J. Proteome Res.">
        <title>Toward a comprehensive characterization of a human cancer cell phosphoproteome.</title>
        <authorList>
            <person name="Zhou H."/>
            <person name="Di Palma S."/>
            <person name="Preisinger C."/>
            <person name="Peng M."/>
            <person name="Polat A.N."/>
            <person name="Heck A.J."/>
            <person name="Mohammed S."/>
        </authorList>
    </citation>
    <scope>PHOSPHORYLATION [LARGE SCALE ANALYSIS] AT SER-27</scope>
    <scope>IDENTIFICATION BY MASS SPECTROMETRY [LARGE SCALE ANALYSIS]</scope>
    <source>
        <tissue>Cervix carcinoma</tissue>
    </source>
</reference>
<feature type="chain" id="PRO_0000315654" description="G kinase-anchoring protein 1">
    <location>
        <begin position="1"/>
        <end position="366"/>
    </location>
</feature>
<feature type="region of interest" description="Interaction with IRS1" evidence="1">
    <location>
        <begin position="1"/>
        <end position="95"/>
    </location>
</feature>
<feature type="region of interest" description="Disordered" evidence="3">
    <location>
        <begin position="20"/>
        <end position="110"/>
    </location>
</feature>
<feature type="region of interest" description="Disordered" evidence="3">
    <location>
        <begin position="147"/>
        <end position="177"/>
    </location>
</feature>
<feature type="coiled-coil region" evidence="2">
    <location>
        <begin position="47"/>
        <end position="77"/>
    </location>
</feature>
<feature type="coiled-coil region" evidence="2">
    <location>
        <begin position="128"/>
        <end position="160"/>
    </location>
</feature>
<feature type="coiled-coil region" evidence="2">
    <location>
        <begin position="243"/>
        <end position="353"/>
    </location>
</feature>
<feature type="compositionally biased region" description="Polar residues" evidence="3">
    <location>
        <begin position="39"/>
        <end position="50"/>
    </location>
</feature>
<feature type="modified residue" description="Phosphoserine" evidence="1">
    <location>
        <position position="23"/>
    </location>
</feature>
<feature type="modified residue" description="Phosphoserine" evidence="1">
    <location>
        <position position="25"/>
    </location>
</feature>
<feature type="modified residue" description="Phosphoserine" evidence="6 7 8">
    <location>
        <position position="27"/>
    </location>
</feature>
<feature type="modified residue" description="Phosphoserine; by PKG" evidence="1">
    <location>
        <position position="106"/>
    </location>
</feature>
<feature type="splice variant" id="VSP_030596" description="In isoform 2." evidence="4">
    <location>
        <begin position="196"/>
        <end position="246"/>
    </location>
</feature>
<feature type="sequence conflict" description="In Ref. 2; AAG40320." evidence="5" ref="2">
    <original>Q</original>
    <variation>R</variation>
    <location>
        <position position="325"/>
    </location>
</feature>
<protein>
    <recommendedName>
        <fullName>G kinase-anchoring protein 1</fullName>
    </recommendedName>
    <alternativeName>
        <fullName>cGMP-dependent protein kinase-anchoring protein of 42 kDa</fullName>
    </alternativeName>
</protein>
<dbReference type="EMBL" id="AB033131">
    <property type="protein sequence ID" value="BAB40454.1"/>
    <property type="molecule type" value="mRNA"/>
</dbReference>
<dbReference type="EMBL" id="AB033132">
    <property type="protein sequence ID" value="BAB40455.1"/>
    <property type="molecule type" value="mRNA"/>
</dbReference>
<dbReference type="EMBL" id="AF319476">
    <property type="protein sequence ID" value="AAG40320.1"/>
    <property type="molecule type" value="mRNA"/>
</dbReference>
<dbReference type="EMBL" id="AL354733">
    <property type="status" value="NOT_ANNOTATED_CDS"/>
    <property type="molecule type" value="Genomic_DNA"/>
</dbReference>
<dbReference type="EMBL" id="AL662787">
    <property type="status" value="NOT_ANNOTATED_CDS"/>
    <property type="molecule type" value="Genomic_DNA"/>
</dbReference>
<dbReference type="EMBL" id="CH471089">
    <property type="protein sequence ID" value="EAW62665.1"/>
    <property type="status" value="ALT_SEQ"/>
    <property type="molecule type" value="Genomic_DNA"/>
</dbReference>
<dbReference type="EMBL" id="CH471089">
    <property type="protein sequence ID" value="EAW62666.1"/>
    <property type="molecule type" value="Genomic_DNA"/>
</dbReference>
<dbReference type="EMBL" id="BC014476">
    <property type="protein sequence ID" value="AAH14476.1"/>
    <property type="molecule type" value="mRNA"/>
</dbReference>
<dbReference type="EMBL" id="AK058198">
    <property type="protein sequence ID" value="BAB71712.1"/>
    <property type="status" value="ALT_INIT"/>
    <property type="molecule type" value="mRNA"/>
</dbReference>
<dbReference type="CCDS" id="CCDS35049.1">
    <molecule id="Q5VSY0-1"/>
</dbReference>
<dbReference type="CCDS" id="CCDS47988.1">
    <molecule id="Q5VSY0-2"/>
</dbReference>
<dbReference type="RefSeq" id="NP_001129425.1">
    <molecule id="Q5VSY0-2"/>
    <property type="nucleotide sequence ID" value="NM_001135953.2"/>
</dbReference>
<dbReference type="RefSeq" id="NP_079487.2">
    <molecule id="Q5VSY0-1"/>
    <property type="nucleotide sequence ID" value="NM_025211.3"/>
</dbReference>
<dbReference type="RefSeq" id="XP_005252298.1">
    <molecule id="Q5VSY0-1"/>
    <property type="nucleotide sequence ID" value="XM_005252241.3"/>
</dbReference>
<dbReference type="RefSeq" id="XP_011517360.1">
    <molecule id="Q5VSY0-1"/>
    <property type="nucleotide sequence ID" value="XM_011519058.3"/>
</dbReference>
<dbReference type="RefSeq" id="XP_054219876.1">
    <molecule id="Q5VSY0-1"/>
    <property type="nucleotide sequence ID" value="XM_054363901.1"/>
</dbReference>
<dbReference type="RefSeq" id="XP_054219877.1">
    <molecule id="Q5VSY0-1"/>
    <property type="nucleotide sequence ID" value="XM_054363902.1"/>
</dbReference>
<dbReference type="SMR" id="Q5VSY0"/>
<dbReference type="BioGRID" id="123231">
    <property type="interactions" value="52"/>
</dbReference>
<dbReference type="DIP" id="DIP-47324N"/>
<dbReference type="FunCoup" id="Q5VSY0">
    <property type="interactions" value="868"/>
</dbReference>
<dbReference type="IntAct" id="Q5VSY0">
    <property type="interactions" value="32"/>
</dbReference>
<dbReference type="MINT" id="Q5VSY0"/>
<dbReference type="STRING" id="9606.ENSP00000365550"/>
<dbReference type="GlyGen" id="Q5VSY0">
    <property type="glycosylation" value="2 sites, 1 O-linked glycan (2 sites)"/>
</dbReference>
<dbReference type="iPTMnet" id="Q5VSY0"/>
<dbReference type="PhosphoSitePlus" id="Q5VSY0"/>
<dbReference type="BioMuta" id="GKAP1"/>
<dbReference type="DMDM" id="166224631"/>
<dbReference type="jPOST" id="Q5VSY0"/>
<dbReference type="MassIVE" id="Q5VSY0"/>
<dbReference type="PaxDb" id="9606-ENSP00000365550"/>
<dbReference type="PeptideAtlas" id="Q5VSY0"/>
<dbReference type="ProteomicsDB" id="65286">
    <molecule id="Q5VSY0-1"/>
</dbReference>
<dbReference type="ProteomicsDB" id="65287">
    <molecule id="Q5VSY0-2"/>
</dbReference>
<dbReference type="Pumba" id="Q5VSY0"/>
<dbReference type="Antibodypedia" id="27552">
    <property type="antibodies" value="170 antibodies from 22 providers"/>
</dbReference>
<dbReference type="DNASU" id="80318"/>
<dbReference type="Ensembl" id="ENST00000376365.7">
    <molecule id="Q5VSY0-2"/>
    <property type="protein sequence ID" value="ENSP00000365544.3"/>
    <property type="gene ID" value="ENSG00000165113.13"/>
</dbReference>
<dbReference type="Ensembl" id="ENST00000376371.7">
    <molecule id="Q5VSY0-1"/>
    <property type="protein sequence ID" value="ENSP00000365550.2"/>
    <property type="gene ID" value="ENSG00000165113.13"/>
</dbReference>
<dbReference type="GeneID" id="80318"/>
<dbReference type="KEGG" id="hsa:80318"/>
<dbReference type="MANE-Select" id="ENST00000376371.7">
    <property type="protein sequence ID" value="ENSP00000365550.2"/>
    <property type="RefSeq nucleotide sequence ID" value="NM_025211.4"/>
    <property type="RefSeq protein sequence ID" value="NP_079487.2"/>
</dbReference>
<dbReference type="UCSC" id="uc004amy.4">
    <molecule id="Q5VSY0-1"/>
    <property type="organism name" value="human"/>
</dbReference>
<dbReference type="AGR" id="HGNC:17496"/>
<dbReference type="CTD" id="80318"/>
<dbReference type="DisGeNET" id="80318"/>
<dbReference type="GeneCards" id="GKAP1"/>
<dbReference type="HGNC" id="HGNC:17496">
    <property type="gene designation" value="GKAP1"/>
</dbReference>
<dbReference type="HPA" id="ENSG00000165113">
    <property type="expression patterns" value="Tissue enriched (testis)"/>
</dbReference>
<dbReference type="MIM" id="611356">
    <property type="type" value="gene"/>
</dbReference>
<dbReference type="neXtProt" id="NX_Q5VSY0"/>
<dbReference type="OpenTargets" id="ENSG00000165113"/>
<dbReference type="PharmGKB" id="PA134880503"/>
<dbReference type="VEuPathDB" id="HostDB:ENSG00000165113"/>
<dbReference type="eggNOG" id="ENOG502QUT6">
    <property type="taxonomic scope" value="Eukaryota"/>
</dbReference>
<dbReference type="GeneTree" id="ENSGT00390000008742"/>
<dbReference type="HOGENOM" id="CLU_065161_1_0_1"/>
<dbReference type="InParanoid" id="Q5VSY0"/>
<dbReference type="OMA" id="RKNHQGR"/>
<dbReference type="OrthoDB" id="5864420at2759"/>
<dbReference type="PAN-GO" id="Q5VSY0">
    <property type="GO annotations" value="1 GO annotation based on evolutionary models"/>
</dbReference>
<dbReference type="PhylomeDB" id="Q5VSY0"/>
<dbReference type="TreeFam" id="TF328459"/>
<dbReference type="PathwayCommons" id="Q5VSY0"/>
<dbReference type="SignaLink" id="Q5VSY0"/>
<dbReference type="SIGNOR" id="Q5VSY0"/>
<dbReference type="BioGRID-ORCS" id="80318">
    <property type="hits" value="23 hits in 1152 CRISPR screens"/>
</dbReference>
<dbReference type="CD-CODE" id="FB4E32DD">
    <property type="entry name" value="Presynaptic clusters and postsynaptic densities"/>
</dbReference>
<dbReference type="ChiTaRS" id="GKAP1">
    <property type="organism name" value="human"/>
</dbReference>
<dbReference type="GenomeRNAi" id="80318"/>
<dbReference type="Pharos" id="Q5VSY0">
    <property type="development level" value="Tdark"/>
</dbReference>
<dbReference type="PRO" id="PR:Q5VSY0"/>
<dbReference type="Proteomes" id="UP000005640">
    <property type="component" value="Chromosome 9"/>
</dbReference>
<dbReference type="RNAct" id="Q5VSY0">
    <property type="molecule type" value="protein"/>
</dbReference>
<dbReference type="Bgee" id="ENSG00000165113">
    <property type="expression patterns" value="Expressed in sperm and 185 other cell types or tissues"/>
</dbReference>
<dbReference type="ExpressionAtlas" id="Q5VSY0">
    <property type="expression patterns" value="baseline and differential"/>
</dbReference>
<dbReference type="GO" id="GO:0005794">
    <property type="term" value="C:Golgi apparatus"/>
    <property type="evidence" value="ECO:0000250"/>
    <property type="project" value="UniProtKB"/>
</dbReference>
<dbReference type="GO" id="GO:0042802">
    <property type="term" value="F:identical protein binding"/>
    <property type="evidence" value="ECO:0000353"/>
    <property type="project" value="IntAct"/>
</dbReference>
<dbReference type="GO" id="GO:0046628">
    <property type="term" value="P:positive regulation of insulin receptor signaling pathway"/>
    <property type="evidence" value="ECO:0000250"/>
    <property type="project" value="UniProtKB"/>
</dbReference>
<dbReference type="GO" id="GO:0007165">
    <property type="term" value="P:signal transduction"/>
    <property type="evidence" value="ECO:0000250"/>
    <property type="project" value="UniProtKB"/>
</dbReference>
<dbReference type="InterPro" id="IPR026109">
    <property type="entry name" value="GKAP1"/>
</dbReference>
<dbReference type="PANTHER" id="PTHR14899">
    <property type="entry name" value="G KINASE ANCHORING PROTEIN 1"/>
    <property type="match status" value="1"/>
</dbReference>
<dbReference type="PANTHER" id="PTHR14899:SF0">
    <property type="entry name" value="G KINASE-ANCHORING PROTEIN 1"/>
    <property type="match status" value="1"/>
</dbReference>
<dbReference type="PRINTS" id="PR02083">
    <property type="entry name" value="GKINASEAP1"/>
</dbReference>
<organism>
    <name type="scientific">Homo sapiens</name>
    <name type="common">Human</name>
    <dbReference type="NCBI Taxonomy" id="9606"/>
    <lineage>
        <taxon>Eukaryota</taxon>
        <taxon>Metazoa</taxon>
        <taxon>Chordata</taxon>
        <taxon>Craniata</taxon>
        <taxon>Vertebrata</taxon>
        <taxon>Euteleostomi</taxon>
        <taxon>Mammalia</taxon>
        <taxon>Eutheria</taxon>
        <taxon>Euarchontoglires</taxon>
        <taxon>Primates</taxon>
        <taxon>Haplorrhini</taxon>
        <taxon>Catarrhini</taxon>
        <taxon>Hominidae</taxon>
        <taxon>Homo</taxon>
    </lineage>
</organism>
<name>GKAP1_HUMAN</name>
<evidence type="ECO:0000250" key="1">
    <source>
        <dbReference type="UniProtKB" id="Q9JMB0"/>
    </source>
</evidence>
<evidence type="ECO:0000255" key="2"/>
<evidence type="ECO:0000256" key="3">
    <source>
        <dbReference type="SAM" id="MobiDB-lite"/>
    </source>
</evidence>
<evidence type="ECO:0000303" key="4">
    <source>
    </source>
</evidence>
<evidence type="ECO:0000305" key="5"/>
<evidence type="ECO:0007744" key="6">
    <source>
    </source>
</evidence>
<evidence type="ECO:0007744" key="7">
    <source>
    </source>
</evidence>
<evidence type="ECO:0007744" key="8">
    <source>
    </source>
</evidence>
<proteinExistence type="evidence at protein level"/>
<comment type="function">
    <text evidence="1">Regulates insulin-dependent IRS1 tyrosine phosphorylation in adipocytes by modulating the availability of IRS1 to IR tyrosine kinase. Its association with IRS1 is required for insulin-induced translocation of SLC2A4 to the cell membrane. Involved in TNF-induced impairment of insulin-dependent IRS1 tyrosine phosphorylation.</text>
</comment>
<comment type="subunit">
    <text evidence="1">Interacts with PRKG1 and IRS1.</text>
</comment>
<comment type="interaction">
    <interactant intactId="EBI-743722">
        <id>Q5VSY0</id>
    </interactant>
    <interactant intactId="EBI-10175413">
        <id>B0YJ76</id>
        <label>DYR</label>
    </interactant>
    <organismsDiffer>false</organismsDiffer>
    <experiments>3</experiments>
</comment>
<comment type="interaction">
    <interactant intactId="EBI-743722">
        <id>Q5VSY0</id>
    </interactant>
    <interactant intactId="EBI-11986315">
        <id>Q9H5Z6-2</id>
        <label>FAM124B</label>
    </interactant>
    <organismsDiffer>false</organismsDiffer>
    <experiments>3</experiments>
</comment>
<comment type="interaction">
    <interactant intactId="EBI-743722">
        <id>Q5VSY0</id>
    </interactant>
    <interactant intactId="EBI-743722">
        <id>Q5VSY0</id>
        <label>GKAP1</label>
    </interactant>
    <organismsDiffer>false</organismsDiffer>
    <experiments>4</experiments>
</comment>
<comment type="interaction">
    <interactant intactId="EBI-743722">
        <id>Q5VSY0</id>
    </interactant>
    <interactant intactId="EBI-750003">
        <id>Q8N4P3</id>
        <label>HDDC3</label>
    </interactant>
    <organismsDiffer>false</organismsDiffer>
    <experiments>3</experiments>
</comment>
<comment type="interaction">
    <interactant intactId="EBI-743722">
        <id>Q5VSY0</id>
    </interactant>
    <interactant intactId="EBI-2556193">
        <id>Q63ZY3</id>
        <label>KANK2</label>
    </interactant>
    <organismsDiffer>false</organismsDiffer>
    <experiments>5</experiments>
</comment>
<comment type="interaction">
    <interactant intactId="EBI-743722">
        <id>Q5VSY0</id>
    </interactant>
    <interactant intactId="EBI-399080">
        <id>Q92993</id>
        <label>KAT5</label>
    </interactant>
    <organismsDiffer>false</organismsDiffer>
    <experiments>3</experiments>
</comment>
<comment type="interaction">
    <interactant intactId="EBI-743722">
        <id>Q5VSY0</id>
    </interactant>
    <interactant intactId="EBI-739909">
        <id>Q969R5</id>
        <label>L3MBTL2</label>
    </interactant>
    <organismsDiffer>false</organismsDiffer>
    <experiments>3</experiments>
</comment>
<comment type="interaction">
    <interactant intactId="EBI-743722">
        <id>Q5VSY0</id>
    </interactant>
    <interactant intactId="EBI-1048159">
        <id>P55081</id>
        <label>MFAP1</label>
    </interactant>
    <organismsDiffer>false</organismsDiffer>
    <experiments>3</experiments>
</comment>
<comment type="interaction">
    <interactant intactId="EBI-743722">
        <id>Q5VSY0</id>
    </interactant>
    <interactant intactId="EBI-742459">
        <id>Q9BU76</id>
        <label>MMTAG2</label>
    </interactant>
    <organismsDiffer>false</organismsDiffer>
    <experiments>3</experiments>
</comment>
<comment type="interaction">
    <interactant intactId="EBI-743722">
        <id>Q5VSY0</id>
    </interactant>
    <interactant intactId="EBI-2861380">
        <id>Q8TCD6</id>
        <label>PHOSPHO2</label>
    </interactant>
    <organismsDiffer>false</organismsDiffer>
    <experiments>3</experiments>
</comment>
<comment type="interaction">
    <interactant intactId="EBI-743722">
        <id>Q5VSY0</id>
    </interactant>
    <interactant intactId="EBI-1504830">
        <id>Q9P2K3-2</id>
        <label>RCOR3</label>
    </interactant>
    <organismsDiffer>false</organismsDiffer>
    <experiments>3</experiments>
</comment>
<comment type="interaction">
    <interactant intactId="EBI-743722">
        <id>Q5VSY0</id>
    </interactant>
    <interactant intactId="EBI-727004">
        <id>O00560</id>
        <label>SDCBP</label>
    </interactant>
    <organismsDiffer>false</organismsDiffer>
    <experiments>3</experiments>
</comment>
<comment type="interaction">
    <interactant intactId="EBI-743722">
        <id>Q5VSY0</id>
    </interactant>
    <interactant intactId="EBI-597063">
        <id>Q8TBK6</id>
        <label>ZCCHC10</label>
    </interactant>
    <organismsDiffer>false</organismsDiffer>
    <experiments>3</experiments>
</comment>
<comment type="subcellular location">
    <subcellularLocation>
        <location evidence="1">Golgi apparatus</location>
    </subcellularLocation>
</comment>
<comment type="alternative products">
    <event type="alternative splicing"/>
    <isoform>
        <id>Q5VSY0-1</id>
        <name>1</name>
        <sequence type="displayed"/>
    </isoform>
    <isoform>
        <id>Q5VSY0-2</id>
        <name>2</name>
        <sequence type="described" ref="VSP_030596"/>
    </isoform>
</comment>
<comment type="similarity">
    <text evidence="5">Belongs to the GKAP1 family.</text>
</comment>
<comment type="sequence caution" evidence="5">
    <conflict type="erroneous initiation">
        <sequence resource="EMBL-CDS" id="BAB71712"/>
    </conflict>
</comment>
<comment type="sequence caution" evidence="5">
    <conflict type="erroneous gene model prediction">
        <sequence resource="EMBL-CDS" id="EAW62665"/>
    </conflict>
</comment>
<gene>
    <name type="primary">GKAP1</name>
    <name type="synonym">GKAP42</name>
    <name type="ORF">FKSG21</name>
</gene>
<sequence>MASAVLSSVPTTASRFALLQVDSGSGSDSEPGKGKGRNTGKSQTLGSKSTTNEKKREKRRKKKEQQQSEANELRNLAFKKIPQKSSHAVCNAQHDLPLSNPVQKDSREENWQEWRQRDEQLTSEMFEADLEKALLLSKLEYEEHKKEYEDAENTSTQSKVMNKKDKRKNHQGKDRPLTVSLKDFHSEDHISKKTEELSSSQTLSHDGGFFNRLEDDVHKILIREKRREQLTEYNGTDNCTAHEHNQEVVLKDGRIERLKLELERKDAEIQKLKNVITQWEAKYKEVKARNAQLLKMLQEGEMKDKAEILLQVDESQSIKNELTIQVTSLHAALEQERSKVKVLQAELAKYQGGRKGKRNSESDQCR</sequence>